<protein>
    <recommendedName>
        <fullName evidence="1">Ribosomal protein L11 methyltransferase</fullName>
        <shortName evidence="1">L11 Mtase</shortName>
        <ecNumber evidence="1">2.1.1.-</ecNumber>
    </recommendedName>
</protein>
<gene>
    <name evidence="1" type="primary">prmA</name>
    <name type="ordered locus">BCE33L4059</name>
</gene>
<evidence type="ECO:0000255" key="1">
    <source>
        <dbReference type="HAMAP-Rule" id="MF_00735"/>
    </source>
</evidence>
<feature type="chain" id="PRO_0000192234" description="Ribosomal protein L11 methyltransferase">
    <location>
        <begin position="1"/>
        <end position="312"/>
    </location>
</feature>
<feature type="binding site" evidence="1">
    <location>
        <position position="162"/>
    </location>
    <ligand>
        <name>S-adenosyl-L-methionine</name>
        <dbReference type="ChEBI" id="CHEBI:59789"/>
    </ligand>
</feature>
<feature type="binding site" evidence="1">
    <location>
        <position position="183"/>
    </location>
    <ligand>
        <name>S-adenosyl-L-methionine</name>
        <dbReference type="ChEBI" id="CHEBI:59789"/>
    </ligand>
</feature>
<feature type="binding site" evidence="1">
    <location>
        <position position="205"/>
    </location>
    <ligand>
        <name>S-adenosyl-L-methionine</name>
        <dbReference type="ChEBI" id="CHEBI:59789"/>
    </ligand>
</feature>
<feature type="binding site" evidence="1">
    <location>
        <position position="248"/>
    </location>
    <ligand>
        <name>S-adenosyl-L-methionine</name>
        <dbReference type="ChEBI" id="CHEBI:59789"/>
    </ligand>
</feature>
<dbReference type="EC" id="2.1.1.-" evidence="1"/>
<dbReference type="EMBL" id="CP000001">
    <property type="protein sequence ID" value="AAU16210.1"/>
    <property type="molecule type" value="Genomic_DNA"/>
</dbReference>
<dbReference type="RefSeq" id="WP_000872105.1">
    <property type="nucleotide sequence ID" value="NZ_CP009968.1"/>
</dbReference>
<dbReference type="SMR" id="Q634M9"/>
<dbReference type="GeneID" id="45024189"/>
<dbReference type="KEGG" id="bcz:BCE33L4059"/>
<dbReference type="PATRIC" id="fig|288681.22.peg.1331"/>
<dbReference type="Proteomes" id="UP000002612">
    <property type="component" value="Chromosome"/>
</dbReference>
<dbReference type="GO" id="GO:0005737">
    <property type="term" value="C:cytoplasm"/>
    <property type="evidence" value="ECO:0007669"/>
    <property type="project" value="UniProtKB-SubCell"/>
</dbReference>
<dbReference type="GO" id="GO:0016279">
    <property type="term" value="F:protein-lysine N-methyltransferase activity"/>
    <property type="evidence" value="ECO:0007669"/>
    <property type="project" value="RHEA"/>
</dbReference>
<dbReference type="GO" id="GO:0032259">
    <property type="term" value="P:methylation"/>
    <property type="evidence" value="ECO:0007669"/>
    <property type="project" value="UniProtKB-KW"/>
</dbReference>
<dbReference type="CDD" id="cd02440">
    <property type="entry name" value="AdoMet_MTases"/>
    <property type="match status" value="1"/>
</dbReference>
<dbReference type="Gene3D" id="3.40.50.150">
    <property type="entry name" value="Vaccinia Virus protein VP39"/>
    <property type="match status" value="1"/>
</dbReference>
<dbReference type="HAMAP" id="MF_00735">
    <property type="entry name" value="Methyltr_PrmA"/>
    <property type="match status" value="1"/>
</dbReference>
<dbReference type="InterPro" id="IPR050078">
    <property type="entry name" value="Ribosomal_L11_MeTrfase_PrmA"/>
</dbReference>
<dbReference type="InterPro" id="IPR004498">
    <property type="entry name" value="Ribosomal_PrmA_MeTrfase"/>
</dbReference>
<dbReference type="InterPro" id="IPR029063">
    <property type="entry name" value="SAM-dependent_MTases_sf"/>
</dbReference>
<dbReference type="NCBIfam" id="TIGR00406">
    <property type="entry name" value="prmA"/>
    <property type="match status" value="1"/>
</dbReference>
<dbReference type="PANTHER" id="PTHR43648">
    <property type="entry name" value="ELECTRON TRANSFER FLAVOPROTEIN BETA SUBUNIT LYSINE METHYLTRANSFERASE"/>
    <property type="match status" value="1"/>
</dbReference>
<dbReference type="PANTHER" id="PTHR43648:SF1">
    <property type="entry name" value="ELECTRON TRANSFER FLAVOPROTEIN BETA SUBUNIT LYSINE METHYLTRANSFERASE"/>
    <property type="match status" value="1"/>
</dbReference>
<dbReference type="Pfam" id="PF06325">
    <property type="entry name" value="PrmA"/>
    <property type="match status" value="1"/>
</dbReference>
<dbReference type="PIRSF" id="PIRSF000401">
    <property type="entry name" value="RPL11_MTase"/>
    <property type="match status" value="1"/>
</dbReference>
<dbReference type="SUPFAM" id="SSF53335">
    <property type="entry name" value="S-adenosyl-L-methionine-dependent methyltransferases"/>
    <property type="match status" value="1"/>
</dbReference>
<reference key="1">
    <citation type="journal article" date="2006" name="J. Bacteriol.">
        <title>Pathogenomic sequence analysis of Bacillus cereus and Bacillus thuringiensis isolates closely related to Bacillus anthracis.</title>
        <authorList>
            <person name="Han C.S."/>
            <person name="Xie G."/>
            <person name="Challacombe J.F."/>
            <person name="Altherr M.R."/>
            <person name="Bhotika S.S."/>
            <person name="Bruce D."/>
            <person name="Campbell C.S."/>
            <person name="Campbell M.L."/>
            <person name="Chen J."/>
            <person name="Chertkov O."/>
            <person name="Cleland C."/>
            <person name="Dimitrijevic M."/>
            <person name="Doggett N.A."/>
            <person name="Fawcett J.J."/>
            <person name="Glavina T."/>
            <person name="Goodwin L.A."/>
            <person name="Hill K.K."/>
            <person name="Hitchcock P."/>
            <person name="Jackson P.J."/>
            <person name="Keim P."/>
            <person name="Kewalramani A.R."/>
            <person name="Longmire J."/>
            <person name="Lucas S."/>
            <person name="Malfatti S."/>
            <person name="McMurry K."/>
            <person name="Meincke L.J."/>
            <person name="Misra M."/>
            <person name="Moseman B.L."/>
            <person name="Mundt M."/>
            <person name="Munk A.C."/>
            <person name="Okinaka R.T."/>
            <person name="Parson-Quintana B."/>
            <person name="Reilly L.P."/>
            <person name="Richardson P."/>
            <person name="Robinson D.L."/>
            <person name="Rubin E."/>
            <person name="Saunders E."/>
            <person name="Tapia R."/>
            <person name="Tesmer J.G."/>
            <person name="Thayer N."/>
            <person name="Thompson L.S."/>
            <person name="Tice H."/>
            <person name="Ticknor L.O."/>
            <person name="Wills P.L."/>
            <person name="Brettin T.S."/>
            <person name="Gilna P."/>
        </authorList>
    </citation>
    <scope>NUCLEOTIDE SEQUENCE [LARGE SCALE GENOMIC DNA]</scope>
    <source>
        <strain>ZK / E33L</strain>
    </source>
</reference>
<name>PRMA_BACCZ</name>
<keyword id="KW-0963">Cytoplasm</keyword>
<keyword id="KW-0489">Methyltransferase</keyword>
<keyword id="KW-0949">S-adenosyl-L-methionine</keyword>
<keyword id="KW-0808">Transferase</keyword>
<organism>
    <name type="scientific">Bacillus cereus (strain ZK / E33L)</name>
    <dbReference type="NCBI Taxonomy" id="288681"/>
    <lineage>
        <taxon>Bacteria</taxon>
        <taxon>Bacillati</taxon>
        <taxon>Bacillota</taxon>
        <taxon>Bacilli</taxon>
        <taxon>Bacillales</taxon>
        <taxon>Bacillaceae</taxon>
        <taxon>Bacillus</taxon>
        <taxon>Bacillus cereus group</taxon>
    </lineage>
</organism>
<sequence>MKWSEISIHTTEEAVEAVSHILHEAGASGVAIEDPAELTKEREQQYGEIYALNPDEYPAEGVLIKAYFPQTDSLHETIAGVKSSIDVLPSYDIEIGTGNITVNEVNEEDWATAWKKYYHPVQISDTFTIVPTWEEYTPSSPEEKIIELDPGMAFGTGTHPTTTMCIRALEKTVQPGDTIIDVGTGSGVLSIAAAKLGASSVQAYDLDPVAVESAEMNVRLNKTDDVVSVGQNSLLEGIEGPVDLIVANLLAEIILLFPEDAARVVKSGGLFITSGIIAAKEKVISEALEKAGFTIEEVLRMEDWVAIIARNA</sequence>
<proteinExistence type="inferred from homology"/>
<accession>Q634M9</accession>
<comment type="function">
    <text evidence="1">Methylates ribosomal protein L11.</text>
</comment>
<comment type="catalytic activity">
    <reaction evidence="1">
        <text>L-lysyl-[protein] + 3 S-adenosyl-L-methionine = N(6),N(6),N(6)-trimethyl-L-lysyl-[protein] + 3 S-adenosyl-L-homocysteine + 3 H(+)</text>
        <dbReference type="Rhea" id="RHEA:54192"/>
        <dbReference type="Rhea" id="RHEA-COMP:9752"/>
        <dbReference type="Rhea" id="RHEA-COMP:13826"/>
        <dbReference type="ChEBI" id="CHEBI:15378"/>
        <dbReference type="ChEBI" id="CHEBI:29969"/>
        <dbReference type="ChEBI" id="CHEBI:57856"/>
        <dbReference type="ChEBI" id="CHEBI:59789"/>
        <dbReference type="ChEBI" id="CHEBI:61961"/>
    </reaction>
</comment>
<comment type="subcellular location">
    <subcellularLocation>
        <location evidence="1">Cytoplasm</location>
    </subcellularLocation>
</comment>
<comment type="similarity">
    <text evidence="1">Belongs to the methyltransferase superfamily. PrmA family.</text>
</comment>